<feature type="initiator methionine" description="Removed" evidence="1">
    <location>
        <position position="1"/>
    </location>
</feature>
<feature type="chain" id="PRO_1000094073" description="Formamidopyrimidine-DNA glycosylase">
    <location>
        <begin position="2"/>
        <end position="269"/>
    </location>
</feature>
<feature type="zinc finger region" description="FPG-type" evidence="2">
    <location>
        <begin position="235"/>
        <end position="269"/>
    </location>
</feature>
<feature type="active site" description="Schiff-base intermediate with DNA" evidence="2">
    <location>
        <position position="2"/>
    </location>
</feature>
<feature type="active site" description="Proton donor" evidence="2">
    <location>
        <position position="3"/>
    </location>
</feature>
<feature type="active site" description="Proton donor; for beta-elimination activity" evidence="2">
    <location>
        <position position="57"/>
    </location>
</feature>
<feature type="active site" description="Proton donor; for delta-elimination activity" evidence="2">
    <location>
        <position position="259"/>
    </location>
</feature>
<feature type="binding site" evidence="2">
    <location>
        <position position="90"/>
    </location>
    <ligand>
        <name>DNA</name>
        <dbReference type="ChEBI" id="CHEBI:16991"/>
    </ligand>
</feature>
<feature type="binding site" evidence="2">
    <location>
        <position position="109"/>
    </location>
    <ligand>
        <name>DNA</name>
        <dbReference type="ChEBI" id="CHEBI:16991"/>
    </ligand>
</feature>
<feature type="binding site" evidence="2">
    <location>
        <position position="150"/>
    </location>
    <ligand>
        <name>DNA</name>
        <dbReference type="ChEBI" id="CHEBI:16991"/>
    </ligand>
</feature>
<gene>
    <name evidence="2" type="primary">mutM</name>
    <name evidence="2" type="synonym">fpg</name>
    <name type="ordered locus">SG3705</name>
</gene>
<evidence type="ECO:0000250" key="1"/>
<evidence type="ECO:0000255" key="2">
    <source>
        <dbReference type="HAMAP-Rule" id="MF_00103"/>
    </source>
</evidence>
<proteinExistence type="inferred from homology"/>
<protein>
    <recommendedName>
        <fullName evidence="2">Formamidopyrimidine-DNA glycosylase</fullName>
        <shortName evidence="2">Fapy-DNA glycosylase</shortName>
        <ecNumber evidence="2">3.2.2.23</ecNumber>
    </recommendedName>
    <alternativeName>
        <fullName evidence="2">DNA-(apurinic or apyrimidinic site) lyase MutM</fullName>
        <shortName evidence="2">AP lyase MutM</shortName>
        <ecNumber evidence="2">4.2.99.18</ecNumber>
    </alternativeName>
</protein>
<reference key="1">
    <citation type="journal article" date="2008" name="Genome Res.">
        <title>Comparative genome analysis of Salmonella enteritidis PT4 and Salmonella gallinarum 287/91 provides insights into evolutionary and host adaptation pathways.</title>
        <authorList>
            <person name="Thomson N.R."/>
            <person name="Clayton D.J."/>
            <person name="Windhorst D."/>
            <person name="Vernikos G."/>
            <person name="Davidson S."/>
            <person name="Churcher C."/>
            <person name="Quail M.A."/>
            <person name="Stevens M."/>
            <person name="Jones M.A."/>
            <person name="Watson M."/>
            <person name="Barron A."/>
            <person name="Layton A."/>
            <person name="Pickard D."/>
            <person name="Kingsley R.A."/>
            <person name="Bignell A."/>
            <person name="Clark L."/>
            <person name="Harris B."/>
            <person name="Ormond D."/>
            <person name="Abdellah Z."/>
            <person name="Brooks K."/>
            <person name="Cherevach I."/>
            <person name="Chillingworth T."/>
            <person name="Woodward J."/>
            <person name="Norberczak H."/>
            <person name="Lord A."/>
            <person name="Arrowsmith C."/>
            <person name="Jagels K."/>
            <person name="Moule S."/>
            <person name="Mungall K."/>
            <person name="Saunders M."/>
            <person name="Whitehead S."/>
            <person name="Chabalgoity J.A."/>
            <person name="Maskell D."/>
            <person name="Humphreys T."/>
            <person name="Roberts M."/>
            <person name="Barrow P.A."/>
            <person name="Dougan G."/>
            <person name="Parkhill J."/>
        </authorList>
    </citation>
    <scope>NUCLEOTIDE SEQUENCE [LARGE SCALE GENOMIC DNA]</scope>
    <source>
        <strain>287/91 / NCTC 13346</strain>
    </source>
</reference>
<accession>B5RGF2</accession>
<keyword id="KW-0227">DNA damage</keyword>
<keyword id="KW-0234">DNA repair</keyword>
<keyword id="KW-0238">DNA-binding</keyword>
<keyword id="KW-0326">Glycosidase</keyword>
<keyword id="KW-0378">Hydrolase</keyword>
<keyword id="KW-0456">Lyase</keyword>
<keyword id="KW-0479">Metal-binding</keyword>
<keyword id="KW-0511">Multifunctional enzyme</keyword>
<keyword id="KW-0862">Zinc</keyword>
<keyword id="KW-0863">Zinc-finger</keyword>
<sequence>MPELPEVETSRRGIEPHLVGATILHAHIRNGRLRWPVSDEIYRLSDTPVLSVQRRAKYLLLELPDGWIIIHLGMSGSLRILSEALPAEKHDHVDLVMSNGKILRYTDPRRFGAWLWTKELEGHNVLAHLGPEPLSDEFNGEYLQQKCAKKKTAIKPWLMDNKLVVGVGNIYASESLFAAGIHPDRLASSLSTEECDLLARVIKAVLLRSIEQGGTTLKDFLQSDGKPGYFAQELQVYGRKGEPCRVCGTPIVATKHAQRATFYCRHCQK</sequence>
<comment type="function">
    <text evidence="2">Involved in base excision repair of DNA damaged by oxidation or by mutagenic agents. Acts as a DNA glycosylase that recognizes and removes damaged bases. Has a preference for oxidized purines, such as 7,8-dihydro-8-oxoguanine (8-oxoG). Has AP (apurinic/apyrimidinic) lyase activity and introduces nicks in the DNA strand. Cleaves the DNA backbone by beta-delta elimination to generate a single-strand break at the site of the removed base with both 3'- and 5'-phosphates.</text>
</comment>
<comment type="catalytic activity">
    <reaction evidence="2">
        <text>Hydrolysis of DNA containing ring-opened 7-methylguanine residues, releasing 2,6-diamino-4-hydroxy-5-(N-methyl)formamidopyrimidine.</text>
        <dbReference type="EC" id="3.2.2.23"/>
    </reaction>
</comment>
<comment type="catalytic activity">
    <reaction evidence="2">
        <text>2'-deoxyribonucleotide-(2'-deoxyribose 5'-phosphate)-2'-deoxyribonucleotide-DNA = a 3'-end 2'-deoxyribonucleotide-(2,3-dehydro-2,3-deoxyribose 5'-phosphate)-DNA + a 5'-end 5'-phospho-2'-deoxyribonucleoside-DNA + H(+)</text>
        <dbReference type="Rhea" id="RHEA:66592"/>
        <dbReference type="Rhea" id="RHEA-COMP:13180"/>
        <dbReference type="Rhea" id="RHEA-COMP:16897"/>
        <dbReference type="Rhea" id="RHEA-COMP:17067"/>
        <dbReference type="ChEBI" id="CHEBI:15378"/>
        <dbReference type="ChEBI" id="CHEBI:136412"/>
        <dbReference type="ChEBI" id="CHEBI:157695"/>
        <dbReference type="ChEBI" id="CHEBI:167181"/>
        <dbReference type="EC" id="4.2.99.18"/>
    </reaction>
</comment>
<comment type="cofactor">
    <cofactor evidence="2">
        <name>Zn(2+)</name>
        <dbReference type="ChEBI" id="CHEBI:29105"/>
    </cofactor>
    <text evidence="2">Binds 1 zinc ion per subunit.</text>
</comment>
<comment type="subunit">
    <text evidence="2">Monomer.</text>
</comment>
<comment type="similarity">
    <text evidence="2">Belongs to the FPG family.</text>
</comment>
<organism>
    <name type="scientific">Salmonella gallinarum (strain 287/91 / NCTC 13346)</name>
    <dbReference type="NCBI Taxonomy" id="550538"/>
    <lineage>
        <taxon>Bacteria</taxon>
        <taxon>Pseudomonadati</taxon>
        <taxon>Pseudomonadota</taxon>
        <taxon>Gammaproteobacteria</taxon>
        <taxon>Enterobacterales</taxon>
        <taxon>Enterobacteriaceae</taxon>
        <taxon>Salmonella</taxon>
    </lineage>
</organism>
<dbReference type="EC" id="3.2.2.23" evidence="2"/>
<dbReference type="EC" id="4.2.99.18" evidence="2"/>
<dbReference type="EMBL" id="AM933173">
    <property type="protein sequence ID" value="CAR39485.1"/>
    <property type="molecule type" value="Genomic_DNA"/>
</dbReference>
<dbReference type="RefSeq" id="WP_001114515.1">
    <property type="nucleotide sequence ID" value="NC_011274.1"/>
</dbReference>
<dbReference type="SMR" id="B5RGF2"/>
<dbReference type="KEGG" id="seg:SG3705"/>
<dbReference type="HOGENOM" id="CLU_038423_1_1_6"/>
<dbReference type="Proteomes" id="UP000008321">
    <property type="component" value="Chromosome"/>
</dbReference>
<dbReference type="GO" id="GO:0034039">
    <property type="term" value="F:8-oxo-7,8-dihydroguanine DNA N-glycosylase activity"/>
    <property type="evidence" value="ECO:0007669"/>
    <property type="project" value="TreeGrafter"/>
</dbReference>
<dbReference type="GO" id="GO:0140078">
    <property type="term" value="F:class I DNA-(apurinic or apyrimidinic site) endonuclease activity"/>
    <property type="evidence" value="ECO:0007669"/>
    <property type="project" value="UniProtKB-EC"/>
</dbReference>
<dbReference type="GO" id="GO:0003684">
    <property type="term" value="F:damaged DNA binding"/>
    <property type="evidence" value="ECO:0007669"/>
    <property type="project" value="InterPro"/>
</dbReference>
<dbReference type="GO" id="GO:0008270">
    <property type="term" value="F:zinc ion binding"/>
    <property type="evidence" value="ECO:0007669"/>
    <property type="project" value="UniProtKB-UniRule"/>
</dbReference>
<dbReference type="GO" id="GO:0006284">
    <property type="term" value="P:base-excision repair"/>
    <property type="evidence" value="ECO:0007669"/>
    <property type="project" value="InterPro"/>
</dbReference>
<dbReference type="CDD" id="cd08966">
    <property type="entry name" value="EcFpg-like_N"/>
    <property type="match status" value="1"/>
</dbReference>
<dbReference type="FunFam" id="1.10.8.50:FF:000003">
    <property type="entry name" value="Formamidopyrimidine-DNA glycosylase"/>
    <property type="match status" value="1"/>
</dbReference>
<dbReference type="FunFam" id="3.20.190.10:FF:000001">
    <property type="entry name" value="Formamidopyrimidine-DNA glycosylase"/>
    <property type="match status" value="1"/>
</dbReference>
<dbReference type="Gene3D" id="1.10.8.50">
    <property type="match status" value="1"/>
</dbReference>
<dbReference type="Gene3D" id="3.20.190.10">
    <property type="entry name" value="MutM-like, N-terminal"/>
    <property type="match status" value="1"/>
</dbReference>
<dbReference type="HAMAP" id="MF_00103">
    <property type="entry name" value="Fapy_DNA_glycosyl"/>
    <property type="match status" value="1"/>
</dbReference>
<dbReference type="InterPro" id="IPR015886">
    <property type="entry name" value="DNA_glyclase/AP_lyase_DNA-bd"/>
</dbReference>
<dbReference type="InterPro" id="IPR015887">
    <property type="entry name" value="DNA_glyclase_Znf_dom_DNA_BS"/>
</dbReference>
<dbReference type="InterPro" id="IPR020629">
    <property type="entry name" value="Formamido-pyr_DNA_Glyclase"/>
</dbReference>
<dbReference type="InterPro" id="IPR012319">
    <property type="entry name" value="FPG_cat"/>
</dbReference>
<dbReference type="InterPro" id="IPR035937">
    <property type="entry name" value="MutM-like_N-ter"/>
</dbReference>
<dbReference type="InterPro" id="IPR010979">
    <property type="entry name" value="Ribosomal_uS13-like_H2TH"/>
</dbReference>
<dbReference type="InterPro" id="IPR000214">
    <property type="entry name" value="Znf_DNA_glyclase/AP_lyase"/>
</dbReference>
<dbReference type="InterPro" id="IPR010663">
    <property type="entry name" value="Znf_FPG/IleRS"/>
</dbReference>
<dbReference type="NCBIfam" id="TIGR00577">
    <property type="entry name" value="fpg"/>
    <property type="match status" value="1"/>
</dbReference>
<dbReference type="NCBIfam" id="NF002211">
    <property type="entry name" value="PRK01103.1"/>
    <property type="match status" value="1"/>
</dbReference>
<dbReference type="PANTHER" id="PTHR22993">
    <property type="entry name" value="FORMAMIDOPYRIMIDINE-DNA GLYCOSYLASE"/>
    <property type="match status" value="1"/>
</dbReference>
<dbReference type="PANTHER" id="PTHR22993:SF9">
    <property type="entry name" value="FORMAMIDOPYRIMIDINE-DNA GLYCOSYLASE"/>
    <property type="match status" value="1"/>
</dbReference>
<dbReference type="Pfam" id="PF01149">
    <property type="entry name" value="Fapy_DNA_glyco"/>
    <property type="match status" value="1"/>
</dbReference>
<dbReference type="Pfam" id="PF06831">
    <property type="entry name" value="H2TH"/>
    <property type="match status" value="1"/>
</dbReference>
<dbReference type="Pfam" id="PF06827">
    <property type="entry name" value="zf-FPG_IleRS"/>
    <property type="match status" value="1"/>
</dbReference>
<dbReference type="SMART" id="SM00898">
    <property type="entry name" value="Fapy_DNA_glyco"/>
    <property type="match status" value="1"/>
</dbReference>
<dbReference type="SMART" id="SM01232">
    <property type="entry name" value="H2TH"/>
    <property type="match status" value="1"/>
</dbReference>
<dbReference type="SUPFAM" id="SSF57716">
    <property type="entry name" value="Glucocorticoid receptor-like (DNA-binding domain)"/>
    <property type="match status" value="1"/>
</dbReference>
<dbReference type="SUPFAM" id="SSF81624">
    <property type="entry name" value="N-terminal domain of MutM-like DNA repair proteins"/>
    <property type="match status" value="1"/>
</dbReference>
<dbReference type="SUPFAM" id="SSF46946">
    <property type="entry name" value="S13-like H2TH domain"/>
    <property type="match status" value="1"/>
</dbReference>
<dbReference type="PROSITE" id="PS51068">
    <property type="entry name" value="FPG_CAT"/>
    <property type="match status" value="1"/>
</dbReference>
<dbReference type="PROSITE" id="PS01242">
    <property type="entry name" value="ZF_FPG_1"/>
    <property type="match status" value="1"/>
</dbReference>
<dbReference type="PROSITE" id="PS51066">
    <property type="entry name" value="ZF_FPG_2"/>
    <property type="match status" value="1"/>
</dbReference>
<name>FPG_SALG2</name>